<sequence length="493" mass="56196">MLQGVIDTHQASLRGILATGALVIFVALFLATFQFQVLCLPLINGRKRFELSLTNSKKRYYADAKGFIQSGFSQSKNGFYAITENGRELILAPKFADDIRNDKRFNFHTYREHTMLPNVAGLDLFQLNDLGKKILSHVIGYRLTHNLEWHEVPLRNSLLAVISQQSSRVFLGKKFCRDPTWLKINTDITVLAFRAVQELRVYPNLLRPVVGWFLPACRVLRSEVRKARKIVEPIVQKRRDYKAACLREQTNPEQFLDTIEWAEECAGSQAYDPTVTQLTIALSAMHNTSDFLTQLVFDLCERPNLIEDLRQEIISVRKKHPWGKATIHHLKLMDSVMKESQRLKPIGLVNMRRRAENSVELADGLIIRKGDLLMISSANQWNPAIYPDPDQFDGYRFYNMRQTPDKKNLSHFVSTNVNHIGFGHGRHACPGRFFAAAETKVALCHILLKYDFKLVGEAPPKILAIGSITSANPFAKIAIRRREEEVSLGVSEP</sequence>
<protein>
    <recommendedName>
        <fullName evidence="4">Cytochrome P450 monooxygenase olcG</fullName>
        <ecNumber evidence="3">1.-.-.-</ecNumber>
    </recommendedName>
    <alternativeName>
        <fullName evidence="4">15-deoxyoxalicine B biosynthesis cluster protein G</fullName>
    </alternativeName>
</protein>
<comment type="function">
    <text evidence="3 6">Cytochrome P450 monooxygenase; part of the gene cluster that mediates the biosynthesis of 15-deoxyoxalicine B (PubMed:30090271). The first step of the pathway is the synthesis of nicotinyl-CoA from nicotinic acid by the nicotinic acid-CoA ligase olcI (PubMed:30090271). Nicotinyl-CoA is then a substrate of polyketide synthase olcA to produce 4-hydroxy-6-(3-pyridinyl)-2H-pyran-2-one (HPPO) which is further prenylated by the polyprenyl transferase olcH to yield geranylgeranyl-HPPO (PubMed:30090271). Geranylgeranyl pyrophosphate is provided by the cluster-specific geranylgeranyl pyrophosphate synthase olcC (PubMed:30090271). The FAD-dependent monooxygenase olcE catalyzes the epoxidation of geranylgeranyl-HPPO and the terpene cyclase olcD catalyzes the cyclization of the terpenoid component, resulting in the formation of the tricyclic terpene moiety seen in predecaturin E (PubMed:30090271). The cytochrome P450 monooxygenase then catalyzes the allylic oxidation of predecaturin E, which is followed by spirocylization with concomitant loss of one molecule of water to form decaturin E (PubMed:30090271). Decaturin E is the substrate of the cytochrome P450 monooxygenase olcJ which hydroxylates it at the C-29 position to form decaturin F (PubMed:30090271). The short-chain dehydrogenase/reductase olcF may catalyze the oxidation of decaturin F to generate the 29-hydroxyl-27-one intermediate, and subsequent hemiacetal formation probably leads to the formation of decaturin C (Probable). The dioxygenase olcK may be a peroxisomal enzyme that catalyzes the hydroxylation of decaturin C into decaturin A once decaturin C is shuttled into the peroxisome by the MFS transporter olcL (Probable). Finally the cytochrome P450 monooxygenase olcB catalyzes the oxidative rearrangement to yield 15-deoxyoxalicine B (PubMed:30090271). In the absence of olcJ, decaturin E may be shunted to a pathway in which it is oxidized to a ketone, possibly by olcF, to form decaturin D, which undergoes further allylic oxidation to yield decaturin G (PubMed:30090271). Moreover, in the absence of oclK or oclL, oclB can convert decaturin C into 15-deoxyoxalicine A (PubMed:30090271).</text>
</comment>
<comment type="cofactor">
    <cofactor evidence="1">
        <name>heme</name>
        <dbReference type="ChEBI" id="CHEBI:30413"/>
    </cofactor>
</comment>
<comment type="pathway">
    <text evidence="3">Secondary metabolite biosynthesis; terpenoid biosynthesis.</text>
</comment>
<comment type="subcellular location">
    <subcellularLocation>
        <location evidence="2">Membrane</location>
        <topology evidence="2">Single-pass membrane protein</topology>
    </subcellularLocation>
</comment>
<comment type="disruption phenotype">
    <text evidence="3">Abolishes the production of 15-deoxyoxalicine B and accumulates predecaturin E.</text>
</comment>
<comment type="miscellaneous">
    <text evidence="3">The 15-deoxyoxalicine B cluster is a rare cluster that contains its own geranylgeranyl pyrophosphate synthase (olcC), in contrast to other related clusters which rely on a FPP/GGPP synthase localized outside of the cluster.</text>
</comment>
<comment type="similarity">
    <text evidence="5">Belongs to the cytochrome P450 family.</text>
</comment>
<evidence type="ECO:0000250" key="1">
    <source>
        <dbReference type="UniProtKB" id="P04798"/>
    </source>
</evidence>
<evidence type="ECO:0000255" key="2"/>
<evidence type="ECO:0000269" key="3">
    <source>
    </source>
</evidence>
<evidence type="ECO:0000303" key="4">
    <source>
    </source>
</evidence>
<evidence type="ECO:0000305" key="5"/>
<evidence type="ECO:0000305" key="6">
    <source>
    </source>
</evidence>
<dbReference type="EC" id="1.-.-.-" evidence="3"/>
<dbReference type="UniPathway" id="UPA00213"/>
<dbReference type="GO" id="GO:0016020">
    <property type="term" value="C:membrane"/>
    <property type="evidence" value="ECO:0007669"/>
    <property type="project" value="UniProtKB-SubCell"/>
</dbReference>
<dbReference type="GO" id="GO:0020037">
    <property type="term" value="F:heme binding"/>
    <property type="evidence" value="ECO:0007669"/>
    <property type="project" value="InterPro"/>
</dbReference>
<dbReference type="GO" id="GO:0005506">
    <property type="term" value="F:iron ion binding"/>
    <property type="evidence" value="ECO:0007669"/>
    <property type="project" value="InterPro"/>
</dbReference>
<dbReference type="GO" id="GO:0004497">
    <property type="term" value="F:monooxygenase activity"/>
    <property type="evidence" value="ECO:0007669"/>
    <property type="project" value="UniProtKB-KW"/>
</dbReference>
<dbReference type="GO" id="GO:0016705">
    <property type="term" value="F:oxidoreductase activity, acting on paired donors, with incorporation or reduction of molecular oxygen"/>
    <property type="evidence" value="ECO:0007669"/>
    <property type="project" value="InterPro"/>
</dbReference>
<dbReference type="GO" id="GO:0043386">
    <property type="term" value="P:mycotoxin biosynthetic process"/>
    <property type="evidence" value="ECO:0007669"/>
    <property type="project" value="UniProtKB-ARBA"/>
</dbReference>
<dbReference type="GO" id="GO:0016114">
    <property type="term" value="P:terpenoid biosynthetic process"/>
    <property type="evidence" value="ECO:0007669"/>
    <property type="project" value="UniProtKB-UniPathway"/>
</dbReference>
<dbReference type="CDD" id="cd11041">
    <property type="entry name" value="CYP503A1-like"/>
    <property type="match status" value="1"/>
</dbReference>
<dbReference type="Gene3D" id="1.10.630.10">
    <property type="entry name" value="Cytochrome P450"/>
    <property type="match status" value="1"/>
</dbReference>
<dbReference type="InterPro" id="IPR001128">
    <property type="entry name" value="Cyt_P450"/>
</dbReference>
<dbReference type="InterPro" id="IPR017972">
    <property type="entry name" value="Cyt_P450_CS"/>
</dbReference>
<dbReference type="InterPro" id="IPR002403">
    <property type="entry name" value="Cyt_P450_E_grp-IV"/>
</dbReference>
<dbReference type="InterPro" id="IPR036396">
    <property type="entry name" value="Cyt_P450_sf"/>
</dbReference>
<dbReference type="PANTHER" id="PTHR46206">
    <property type="entry name" value="CYTOCHROME P450"/>
    <property type="match status" value="1"/>
</dbReference>
<dbReference type="PANTHER" id="PTHR46206:SF2">
    <property type="entry name" value="CYTOCHROME P450 MONOOXYGENASE AUSG-RELATED"/>
    <property type="match status" value="1"/>
</dbReference>
<dbReference type="Pfam" id="PF00067">
    <property type="entry name" value="p450"/>
    <property type="match status" value="1"/>
</dbReference>
<dbReference type="PRINTS" id="PR00465">
    <property type="entry name" value="EP450IV"/>
</dbReference>
<dbReference type="SUPFAM" id="SSF48264">
    <property type="entry name" value="Cytochrome P450"/>
    <property type="match status" value="1"/>
</dbReference>
<dbReference type="PROSITE" id="PS00086">
    <property type="entry name" value="CYTOCHROME_P450"/>
    <property type="match status" value="1"/>
</dbReference>
<gene>
    <name evidence="4" type="primary">olcG</name>
</gene>
<name>OLCG_PENCN</name>
<proteinExistence type="inferred from homology"/>
<organism>
    <name type="scientific">Penicillium canescens</name>
    <dbReference type="NCBI Taxonomy" id="5083"/>
    <lineage>
        <taxon>Eukaryota</taxon>
        <taxon>Fungi</taxon>
        <taxon>Dikarya</taxon>
        <taxon>Ascomycota</taxon>
        <taxon>Pezizomycotina</taxon>
        <taxon>Eurotiomycetes</taxon>
        <taxon>Eurotiomycetidae</taxon>
        <taxon>Eurotiales</taxon>
        <taxon>Aspergillaceae</taxon>
        <taxon>Penicillium</taxon>
    </lineage>
</organism>
<feature type="chain" id="PRO_0000453887" description="Cytochrome P450 monooxygenase olcG">
    <location>
        <begin position="1"/>
        <end position="493"/>
    </location>
</feature>
<feature type="transmembrane region" description="Helical" evidence="2">
    <location>
        <begin position="15"/>
        <end position="35"/>
    </location>
</feature>
<feature type="binding site" description="axial binding residue" evidence="1">
    <location>
        <position position="429"/>
    </location>
    <ligand>
        <name>heme</name>
        <dbReference type="ChEBI" id="CHEBI:30413"/>
    </ligand>
    <ligandPart>
        <name>Fe</name>
        <dbReference type="ChEBI" id="CHEBI:18248"/>
    </ligandPart>
</feature>
<keyword id="KW-0349">Heme</keyword>
<keyword id="KW-0408">Iron</keyword>
<keyword id="KW-0472">Membrane</keyword>
<keyword id="KW-0479">Metal-binding</keyword>
<keyword id="KW-0503">Monooxygenase</keyword>
<keyword id="KW-0560">Oxidoreductase</keyword>
<keyword id="KW-0812">Transmembrane</keyword>
<keyword id="KW-1133">Transmembrane helix</keyword>
<accession>P9WEQ6</accession>
<reference key="1">
    <citation type="journal article" date="2015" name="Chem. Sci.">
        <title>Genome mining and molecular characterization of the biosynthetic gene cluster of a diterpenic meroterpenoid, 15-deoxyoxalicine B, in Penicillium canescens.</title>
        <authorList>
            <person name="Yaegashi J."/>
            <person name="Romsdahl J."/>
            <person name="Chiang Y.M."/>
            <person name="Wang C.C.C."/>
        </authorList>
    </citation>
    <scope>FUNCTION</scope>
    <scope>DISRUPTION PHENOTYPE</scope>
    <scope>PATHWAY</scope>
</reference>
<reference key="2">
    <citation type="journal article" date="2016" name="Chem. Sci.">
        <title>Correction: Genome mining and molecular characterization of the biosynthetic gene cluster of a diterpenic meroterpenoid, 15-deoxyoxalicine B, in Penicillium canescens.</title>
        <authorList>
            <person name="Yaegashi J."/>
            <person name="Romsdahl J."/>
            <person name="Chiang Y.M."/>
            <person name="Wang C.C.C."/>
        </authorList>
    </citation>
    <scope>ERRATUM OF PUBMED:30090271</scope>
</reference>